<reference key="1">
    <citation type="journal article" date="1996" name="J. Biol. Chem.">
        <title>Identification of two rat genes orthologous to the human interleukin-8 receptors.</title>
        <authorList>
            <person name="Dunstan C.-A.N."/>
            <person name="Salafranca M.N."/>
            <person name="Adhikari S."/>
            <person name="Xia Y."/>
            <person name="Feng L."/>
            <person name="Harrison J.K."/>
        </authorList>
    </citation>
    <scope>NUCLEOTIDE SEQUENCE [GENOMIC DNA]</scope>
    <source>
        <strain>Wistar</strain>
        <tissue>Lung</tissue>
    </source>
</reference>
<comment type="function">
    <text evidence="1">Receptor to interleukin-8, which is a powerful neutrophils chemotactic factor. Binding of IL-8 to the receptor causes activation of neutrophils. This response is mediated via a G-protein that activates a phosphatidylinositol-calcium second messenger system.</text>
</comment>
<comment type="subunit">
    <text evidence="1">Interacts with IL8. Interacts with GNAI2.</text>
</comment>
<comment type="subcellular location">
    <subcellularLocation>
        <location>Cell membrane</location>
        <topology>Multi-pass membrane protein</topology>
    </subcellularLocation>
</comment>
<comment type="similarity">
    <text evidence="3">Belongs to the G-protein coupled receptor 1 family.</text>
</comment>
<accession>P70612</accession>
<keyword id="KW-1003">Cell membrane</keyword>
<keyword id="KW-0145">Chemotaxis</keyword>
<keyword id="KW-1015">Disulfide bond</keyword>
<keyword id="KW-0297">G-protein coupled receptor</keyword>
<keyword id="KW-0325">Glycoprotein</keyword>
<keyword id="KW-0472">Membrane</keyword>
<keyword id="KW-0675">Receptor</keyword>
<keyword id="KW-1185">Reference proteome</keyword>
<keyword id="KW-0807">Transducer</keyword>
<keyword id="KW-0812">Transmembrane</keyword>
<keyword id="KW-1133">Transmembrane helix</keyword>
<gene>
    <name type="primary">Cxcr1</name>
    <name type="synonym">Il8ra</name>
</gene>
<feature type="chain" id="PRO_0000069333" description="C-X-C chemokine receptor type 1">
    <location>
        <begin position="1"/>
        <end position="349"/>
    </location>
</feature>
<feature type="topological domain" description="Extracellular" evidence="2">
    <location>
        <begin position="1"/>
        <end position="44"/>
    </location>
</feature>
<feature type="transmembrane region" description="Helical; Name=1" evidence="2">
    <location>
        <begin position="45"/>
        <end position="71"/>
    </location>
</feature>
<feature type="topological domain" description="Cytoplasmic" evidence="2">
    <location>
        <begin position="72"/>
        <end position="80"/>
    </location>
</feature>
<feature type="transmembrane region" description="Helical; Name=2" evidence="2">
    <location>
        <begin position="81"/>
        <end position="101"/>
    </location>
</feature>
<feature type="topological domain" description="Extracellular" evidence="2">
    <location>
        <begin position="102"/>
        <end position="116"/>
    </location>
</feature>
<feature type="transmembrane region" description="Helical; Name=3" evidence="2">
    <location>
        <begin position="117"/>
        <end position="138"/>
    </location>
</feature>
<feature type="topological domain" description="Cytoplasmic" evidence="2">
    <location>
        <begin position="139"/>
        <end position="159"/>
    </location>
</feature>
<feature type="transmembrane region" description="Helical; Name=4" evidence="2">
    <location>
        <begin position="160"/>
        <end position="179"/>
    </location>
</feature>
<feature type="topological domain" description="Extracellular" evidence="2">
    <location>
        <begin position="180"/>
        <end position="204"/>
    </location>
</feature>
<feature type="transmembrane region" description="Helical; Name=5" evidence="2">
    <location>
        <begin position="205"/>
        <end position="225"/>
    </location>
</feature>
<feature type="topological domain" description="Cytoplasmic" evidence="2">
    <location>
        <begin position="226"/>
        <end position="247"/>
    </location>
</feature>
<feature type="transmembrane region" description="Helical; Name=6" evidence="2">
    <location>
        <begin position="248"/>
        <end position="269"/>
    </location>
</feature>
<feature type="topological domain" description="Extracellular" evidence="2">
    <location>
        <begin position="270"/>
        <end position="290"/>
    </location>
</feature>
<feature type="transmembrane region" description="Helical; Name=7" evidence="2">
    <location>
        <begin position="291"/>
        <end position="313"/>
    </location>
</feature>
<feature type="topological domain" description="Cytoplasmic" evidence="2">
    <location>
        <begin position="314"/>
        <end position="349"/>
    </location>
</feature>
<feature type="glycosylation site" description="N-linked (GlcNAc...) asparagine" evidence="2">
    <location>
        <position position="22"/>
    </location>
</feature>
<feature type="disulfide bond" evidence="3">
    <location>
        <begin position="115"/>
        <end position="192"/>
    </location>
</feature>
<name>CXCR1_RAT</name>
<proteinExistence type="inferred from homology"/>
<protein>
    <recommendedName>
        <fullName>C-X-C chemokine receptor type 1</fullName>
        <shortName>CXC-R1</shortName>
        <shortName>CXCR-1</shortName>
    </recommendedName>
    <alternativeName>
        <fullName>High affinity interleukin-8 receptor A</fullName>
        <shortName>IL-8R A</shortName>
    </alternativeName>
    <cdAntigenName>CD181</cdAntigenName>
</protein>
<dbReference type="EMBL" id="U71089">
    <property type="protein sequence ID" value="AAC52962.1"/>
    <property type="molecule type" value="Genomic_DNA"/>
</dbReference>
<dbReference type="RefSeq" id="NP_062183.1">
    <property type="nucleotide sequence ID" value="NM_019310.2"/>
</dbReference>
<dbReference type="RefSeq" id="XP_006245335.2">
    <property type="nucleotide sequence ID" value="XM_006245273.3"/>
</dbReference>
<dbReference type="SMR" id="P70612"/>
<dbReference type="FunCoup" id="P70612">
    <property type="interactions" value="245"/>
</dbReference>
<dbReference type="STRING" id="10116.ENSRNOP00000070273"/>
<dbReference type="GlyCosmos" id="P70612">
    <property type="glycosylation" value="1 site, No reported glycans"/>
</dbReference>
<dbReference type="GlyGen" id="P70612">
    <property type="glycosylation" value="1 site"/>
</dbReference>
<dbReference type="PhosphoSitePlus" id="P70612"/>
<dbReference type="PaxDb" id="10116-ENSRNOP00000066188"/>
<dbReference type="Ensembl" id="ENSRNOT00000090868.2">
    <property type="protein sequence ID" value="ENSRNOP00000070273.1"/>
    <property type="gene ID" value="ENSRNOG00000048239.3"/>
</dbReference>
<dbReference type="GeneID" id="54258"/>
<dbReference type="KEGG" id="rno:54258"/>
<dbReference type="UCSC" id="RGD:2905">
    <property type="organism name" value="rat"/>
</dbReference>
<dbReference type="AGR" id="RGD:2905"/>
<dbReference type="CTD" id="3577"/>
<dbReference type="RGD" id="2905">
    <property type="gene designation" value="Cxcr1"/>
</dbReference>
<dbReference type="eggNOG" id="KOG3656">
    <property type="taxonomic scope" value="Eukaryota"/>
</dbReference>
<dbReference type="GeneTree" id="ENSGT01050000244848"/>
<dbReference type="InParanoid" id="P70612"/>
<dbReference type="OMA" id="DTCPRRE"/>
<dbReference type="OrthoDB" id="68855at9989"/>
<dbReference type="PhylomeDB" id="P70612"/>
<dbReference type="Reactome" id="R-RNO-380108">
    <property type="pathway name" value="Chemokine receptors bind chemokines"/>
</dbReference>
<dbReference type="Reactome" id="R-RNO-418594">
    <property type="pathway name" value="G alpha (i) signalling events"/>
</dbReference>
<dbReference type="Reactome" id="R-RNO-6798695">
    <property type="pathway name" value="Neutrophil degranulation"/>
</dbReference>
<dbReference type="PRO" id="PR:P70612"/>
<dbReference type="Proteomes" id="UP000002494">
    <property type="component" value="Chromosome 9"/>
</dbReference>
<dbReference type="Bgee" id="ENSRNOG00000048239">
    <property type="expression patterns" value="Expressed in lung"/>
</dbReference>
<dbReference type="GO" id="GO:0009897">
    <property type="term" value="C:external side of plasma membrane"/>
    <property type="evidence" value="ECO:0000318"/>
    <property type="project" value="GO_Central"/>
</dbReference>
<dbReference type="GO" id="GO:0019957">
    <property type="term" value="F:C-C chemokine binding"/>
    <property type="evidence" value="ECO:0000318"/>
    <property type="project" value="GO_Central"/>
</dbReference>
<dbReference type="GO" id="GO:0016493">
    <property type="term" value="F:C-C chemokine receptor activity"/>
    <property type="evidence" value="ECO:0000318"/>
    <property type="project" value="GO_Central"/>
</dbReference>
<dbReference type="GO" id="GO:0019959">
    <property type="term" value="F:interleukin-8 binding"/>
    <property type="evidence" value="ECO:0000266"/>
    <property type="project" value="RGD"/>
</dbReference>
<dbReference type="GO" id="GO:0004918">
    <property type="term" value="F:interleukin-8 receptor activity"/>
    <property type="evidence" value="ECO:0000266"/>
    <property type="project" value="RGD"/>
</dbReference>
<dbReference type="GO" id="GO:0019722">
    <property type="term" value="P:calcium-mediated signaling"/>
    <property type="evidence" value="ECO:0000318"/>
    <property type="project" value="GO_Central"/>
</dbReference>
<dbReference type="GO" id="GO:0007166">
    <property type="term" value="P:cell surface receptor signaling pathway"/>
    <property type="evidence" value="ECO:0000266"/>
    <property type="project" value="RGD"/>
</dbReference>
<dbReference type="GO" id="GO:0006955">
    <property type="term" value="P:immune response"/>
    <property type="evidence" value="ECO:0000318"/>
    <property type="project" value="GO_Central"/>
</dbReference>
<dbReference type="GO" id="GO:0030593">
    <property type="term" value="P:neutrophil chemotaxis"/>
    <property type="evidence" value="ECO:0000318"/>
    <property type="project" value="GO_Central"/>
</dbReference>
<dbReference type="GO" id="GO:0007204">
    <property type="term" value="P:positive regulation of cytosolic calcium ion concentration"/>
    <property type="evidence" value="ECO:0000318"/>
    <property type="project" value="GO_Central"/>
</dbReference>
<dbReference type="GO" id="GO:0031623">
    <property type="term" value="P:receptor internalization"/>
    <property type="evidence" value="ECO:0000266"/>
    <property type="project" value="RGD"/>
</dbReference>
<dbReference type="CDD" id="cd15178">
    <property type="entry name" value="7tmA_CXCR1_2"/>
    <property type="match status" value="1"/>
</dbReference>
<dbReference type="FunFam" id="1.20.1070.10:FF:000157">
    <property type="entry name" value="C-X-C chemokine receptor type 2"/>
    <property type="match status" value="1"/>
</dbReference>
<dbReference type="Gene3D" id="1.20.1070.10">
    <property type="entry name" value="Rhodopsin 7-helix transmembrane proteins"/>
    <property type="match status" value="1"/>
</dbReference>
<dbReference type="InterPro" id="IPR050119">
    <property type="entry name" value="CCR1-9-like"/>
</dbReference>
<dbReference type="InterPro" id="IPR000174">
    <property type="entry name" value="Chemokine_CXCR_1/2"/>
</dbReference>
<dbReference type="InterPro" id="IPR000276">
    <property type="entry name" value="GPCR_Rhodpsn"/>
</dbReference>
<dbReference type="InterPro" id="IPR017452">
    <property type="entry name" value="GPCR_Rhodpsn_7TM"/>
</dbReference>
<dbReference type="PANTHER" id="PTHR10489:SF916">
    <property type="entry name" value="C-X-C CHEMOKINE RECEPTOR TYPE 1"/>
    <property type="match status" value="1"/>
</dbReference>
<dbReference type="PANTHER" id="PTHR10489">
    <property type="entry name" value="CELL ADHESION MOLECULE"/>
    <property type="match status" value="1"/>
</dbReference>
<dbReference type="Pfam" id="PF00001">
    <property type="entry name" value="7tm_1"/>
    <property type="match status" value="1"/>
</dbReference>
<dbReference type="PRINTS" id="PR00237">
    <property type="entry name" value="GPCRRHODOPSN"/>
</dbReference>
<dbReference type="PRINTS" id="PR00427">
    <property type="entry name" value="INTRLEUKIN8R"/>
</dbReference>
<dbReference type="SUPFAM" id="SSF81321">
    <property type="entry name" value="Family A G protein-coupled receptor-like"/>
    <property type="match status" value="1"/>
</dbReference>
<dbReference type="PROSITE" id="PS00237">
    <property type="entry name" value="G_PROTEIN_RECEP_F1_1"/>
    <property type="match status" value="1"/>
</dbReference>
<dbReference type="PROSITE" id="PS50262">
    <property type="entry name" value="G_PROTEIN_RECEP_F1_2"/>
    <property type="match status" value="1"/>
</dbReference>
<evidence type="ECO:0000250" key="1">
    <source>
        <dbReference type="UniProtKB" id="P25024"/>
    </source>
</evidence>
<evidence type="ECO:0000255" key="2"/>
<evidence type="ECO:0000255" key="3">
    <source>
        <dbReference type="PROSITE-ProRule" id="PRU00521"/>
    </source>
</evidence>
<sequence length="349" mass="39945">MAEAEYFIWIAPEGDFEEEFGNITRMLPTGEYFSPCKRVPMTNRQAVVVFYALVFLLSLLGNSLVMLVILYRRRTRSVTDVYVLNLAIADLLFSLTLPFLAVSKWKGWIFGTPLCKMVSLLKEVNFFSGILLLACISVDRYLAIVHATRTLTRKRYLVKFVCMGTWGLSLVLSLPFAIFRQAYKPYRSGTVCYEVLGEATADLRITLRGLSHIFGFLLPLFIMLVCYGLTLRTLFKAHMRQKRRAMWVIFAVVLVFLLCCLPYNLVLLSDTLLGAHLIQDTCERRNNIDQALYITEILGFSHSCLNPVIYAFVGQSFRHEFLKILANLVHKEVLTHHSASFRTSLTTIY</sequence>
<organism>
    <name type="scientific">Rattus norvegicus</name>
    <name type="common">Rat</name>
    <dbReference type="NCBI Taxonomy" id="10116"/>
    <lineage>
        <taxon>Eukaryota</taxon>
        <taxon>Metazoa</taxon>
        <taxon>Chordata</taxon>
        <taxon>Craniata</taxon>
        <taxon>Vertebrata</taxon>
        <taxon>Euteleostomi</taxon>
        <taxon>Mammalia</taxon>
        <taxon>Eutheria</taxon>
        <taxon>Euarchontoglires</taxon>
        <taxon>Glires</taxon>
        <taxon>Rodentia</taxon>
        <taxon>Myomorpha</taxon>
        <taxon>Muroidea</taxon>
        <taxon>Muridae</taxon>
        <taxon>Murinae</taxon>
        <taxon>Rattus</taxon>
    </lineage>
</organism>